<comment type="function">
    <text evidence="5">Catalyzes the transfer of L-fucose, from a guanosine diphosphate-beta-L-fucose, to the terminal galactose on both O- and N-linked glycans chains of cell surface glycoproteins and glycolipids and the resulting epitope regulates several processes such as cell-cell interaction including host-microbe interaction, cell surface expression and cell proliferation. Preferentially fucosylates gangliosides GA1 and GM1 in the antrum, cecum and colon and in the female reproductive organs. Fucosylated host glycoproteins or glycolipids mediate interaction with intestinal microbiota influencing its composition. Creates a soluble precursor oligosaccharide FuC-alpha ((1,2)Galbeta-) called the H antigen which is an essential substrate for the final step in the soluble ABO blood group antigen synthesis pathway.</text>
</comment>
<comment type="catalytic activity">
    <reaction evidence="5">
        <text>a beta-D-galactosyl-(1-&gt;3)-N-acetyl-beta-D-glucosaminyl derivative + GDP-beta-L-fucose = an alpha-L-Fuc-(1-&gt;2)-beta-D-Gal-(1-&gt;3)-beta-D-GlcNAc derivative + GDP + H(+)</text>
        <dbReference type="Rhea" id="RHEA:50664"/>
        <dbReference type="ChEBI" id="CHEBI:15378"/>
        <dbReference type="ChEBI" id="CHEBI:57273"/>
        <dbReference type="ChEBI" id="CHEBI:58189"/>
        <dbReference type="ChEBI" id="CHEBI:133506"/>
        <dbReference type="ChEBI" id="CHEBI:133509"/>
        <dbReference type="EC" id="2.4.1.69"/>
    </reaction>
    <physiologicalReaction direction="left-to-right" evidence="5">
        <dbReference type="Rhea" id="RHEA:50665"/>
    </physiologicalReaction>
</comment>
<comment type="catalytic activity">
    <reaction evidence="5">
        <text>a beta-D-galactosyl-(1-&gt;4)-N-acetyl-beta-D-glucosaminyl derivative + GDP-beta-L-fucose = an alpha-L-Fuc-(1-&gt;2)-beta-D-Gal-(1-&gt;4)-beta-D-GlcNAc derivative + GDP + H(+)</text>
        <dbReference type="Rhea" id="RHEA:50668"/>
        <dbReference type="ChEBI" id="CHEBI:15378"/>
        <dbReference type="ChEBI" id="CHEBI:57273"/>
        <dbReference type="ChEBI" id="CHEBI:58189"/>
        <dbReference type="ChEBI" id="CHEBI:133507"/>
        <dbReference type="ChEBI" id="CHEBI:133510"/>
        <dbReference type="EC" id="2.4.1.344"/>
    </reaction>
    <physiologicalReaction direction="left-to-right" evidence="5">
        <dbReference type="Rhea" id="RHEA:50669"/>
    </physiologicalReaction>
</comment>
<comment type="catalytic activity">
    <reaction evidence="5">
        <text>a neolactoside nLc4Cer + GDP-beta-L-fucose = a neolactoside IV(2)-alpha-Fuc-nLc4Cer + GDP + H(+)</text>
        <dbReference type="Rhea" id="RHEA:48800"/>
        <dbReference type="ChEBI" id="CHEBI:15378"/>
        <dbReference type="ChEBI" id="CHEBI:57273"/>
        <dbReference type="ChEBI" id="CHEBI:58189"/>
        <dbReference type="ChEBI" id="CHEBI:90376"/>
        <dbReference type="ChEBI" id="CHEBI:90803"/>
    </reaction>
    <physiologicalReaction direction="left-to-right" evidence="5">
        <dbReference type="Rhea" id="RHEA:48801"/>
    </physiologicalReaction>
</comment>
<comment type="catalytic activity">
    <reaction evidence="5">
        <text>a neolactoside nLc4Cer(d18:1(4E)) + GDP-beta-L-fucose = a neolactoside IV(2)-alpha-Fuc-nLc4Cer(d18:1(4E)) + GDP + H(+)</text>
        <dbReference type="Rhea" id="RHEA:48304"/>
        <dbReference type="ChEBI" id="CHEBI:15378"/>
        <dbReference type="ChEBI" id="CHEBI:17006"/>
        <dbReference type="ChEBI" id="CHEBI:28691"/>
        <dbReference type="ChEBI" id="CHEBI:57273"/>
        <dbReference type="ChEBI" id="CHEBI:58189"/>
    </reaction>
    <physiologicalReaction direction="left-to-right" evidence="5">
        <dbReference type="Rhea" id="RHEA:48305"/>
    </physiologicalReaction>
</comment>
<comment type="catalytic activity">
    <reaction evidence="5">
        <text>a ganglioside GM1 + GDP-beta-L-fucose = a ganglioside Fuc-GM1 + GDP + H(+)</text>
        <dbReference type="Rhea" id="RHEA:48292"/>
        <dbReference type="ChEBI" id="CHEBI:15378"/>
        <dbReference type="ChEBI" id="CHEBI:57273"/>
        <dbReference type="ChEBI" id="CHEBI:58189"/>
        <dbReference type="ChEBI" id="CHEBI:82639"/>
        <dbReference type="ChEBI" id="CHEBI:90189"/>
    </reaction>
    <physiologicalReaction direction="left-to-right" evidence="5">
        <dbReference type="Rhea" id="RHEA:48293"/>
    </physiologicalReaction>
</comment>
<comment type="catalytic activity">
    <reaction evidence="5">
        <text>a ganglioside GA1 + GDP-beta-L-fucose = a ganglioside Fuc-GA1 + GDP + H(+)</text>
        <dbReference type="Rhea" id="RHEA:48320"/>
        <dbReference type="ChEBI" id="CHEBI:15378"/>
        <dbReference type="ChEBI" id="CHEBI:57273"/>
        <dbReference type="ChEBI" id="CHEBI:58189"/>
        <dbReference type="ChEBI" id="CHEBI:88069"/>
        <dbReference type="ChEBI" id="CHEBI:90262"/>
    </reaction>
    <physiologicalReaction direction="left-to-right" evidence="5">
        <dbReference type="Rhea" id="RHEA:48321"/>
    </physiologicalReaction>
</comment>
<comment type="catalytic activity">
    <reaction evidence="5">
        <text>Lc4Cer + GDP-beta-L-fucose = alpha-L-fucosyl-(1-&gt;2)-beta-D-galactosyl-(1-&gt;3)-N-acetyl-beta-D-glucosaminyl-(1-&gt;3)-beta-D-galactosyl-(1-&gt;4)-beta-D-glucosyl-(1&lt;-&gt;1')-ceramide + GDP + H(+)</text>
        <dbReference type="Rhea" id="RHEA:48792"/>
        <dbReference type="ChEBI" id="CHEBI:15378"/>
        <dbReference type="ChEBI" id="CHEBI:57273"/>
        <dbReference type="ChEBI" id="CHEBI:58189"/>
        <dbReference type="ChEBI" id="CHEBI:90800"/>
        <dbReference type="ChEBI" id="CHEBI:90802"/>
    </reaction>
    <physiologicalReaction direction="left-to-right" evidence="5">
        <dbReference type="Rhea" id="RHEA:48793"/>
    </physiologicalReaction>
</comment>
<comment type="catalytic activity">
    <reaction evidence="5">
        <text>a beta-D-Gal-(1-&gt;3)-beta-D-GlcNAc-(1-&gt;3)-beta-D-Gal-(1-&gt;4)-beta-D-Glc-(1&lt;-&gt;1')-Cer(d18:1(4E)) + GDP-beta-L-fucose = alpha-L-fucosyl-(1-&gt;2)- beta-D-galactosyl-(1-&gt;3)-N-acetyl-beta-D-glucosaminyl-(1-&gt;3)-beta-D-galactosyl-(1-&gt;4)-beta-D-glucosyl-(1&lt;-&gt;1')-N-acylsphing-4-enine + GDP + H(+)</text>
        <dbReference type="Rhea" id="RHEA:32175"/>
        <dbReference type="ChEBI" id="CHEBI:15378"/>
        <dbReference type="ChEBI" id="CHEBI:17292"/>
        <dbReference type="ChEBI" id="CHEBI:28743"/>
        <dbReference type="ChEBI" id="CHEBI:57273"/>
        <dbReference type="ChEBI" id="CHEBI:58189"/>
        <dbReference type="EC" id="2.4.1.69"/>
    </reaction>
    <physiologicalReaction direction="left-to-right" evidence="5">
        <dbReference type="Rhea" id="RHEA:32176"/>
    </physiologicalReaction>
</comment>
<comment type="catalytic activity">
    <reaction evidence="5">
        <text>a ganglioside GD1b + GDP-beta-L-fucose = a ganglioside Fuc-GD1b + GDP + H(+)</text>
        <dbReference type="Rhea" id="RHEA:48324"/>
        <dbReference type="ChEBI" id="CHEBI:15378"/>
        <dbReference type="ChEBI" id="CHEBI:57273"/>
        <dbReference type="ChEBI" id="CHEBI:58189"/>
        <dbReference type="ChEBI" id="CHEBI:82939"/>
        <dbReference type="ChEBI" id="CHEBI:90265"/>
    </reaction>
    <physiologicalReaction direction="left-to-right" evidence="5">
        <dbReference type="Rhea" id="RHEA:48325"/>
    </physiologicalReaction>
</comment>
<comment type="catalytic activity">
    <reaction evidence="3">
        <text>a ganglioside GM1 (d18:1(4E)) + GDP-beta-L-fucose = a ganglioside Fuc-GM1 (d18:1(4E)) + GDP + H(+)</text>
        <dbReference type="Rhea" id="RHEA:42040"/>
        <dbReference type="ChEBI" id="CHEBI:15378"/>
        <dbReference type="ChEBI" id="CHEBI:57273"/>
        <dbReference type="ChEBI" id="CHEBI:58189"/>
        <dbReference type="ChEBI" id="CHEBI:77709"/>
        <dbReference type="ChEBI" id="CHEBI:78607"/>
    </reaction>
    <physiologicalReaction direction="left-to-right" evidence="3">
        <dbReference type="Rhea" id="RHEA:42041"/>
    </physiologicalReaction>
</comment>
<comment type="catalytic activity">
    <reaction evidence="3">
        <text>a globoside GalGb4Cer (d18:1(4E)) + GDP-beta-L-fucose = a globoside Globo-H (d18:1(4E)) + GDP + H(+)</text>
        <dbReference type="Rhea" id="RHEA:42044"/>
        <dbReference type="ChEBI" id="CHEBI:15378"/>
        <dbReference type="ChEBI" id="CHEBI:57273"/>
        <dbReference type="ChEBI" id="CHEBI:58189"/>
        <dbReference type="ChEBI" id="CHEBI:62571"/>
        <dbReference type="ChEBI" id="CHEBI:62649"/>
    </reaction>
    <physiologicalReaction direction="left-to-right" evidence="3">
        <dbReference type="Rhea" id="RHEA:42045"/>
    </physiologicalReaction>
</comment>
<comment type="catalytic activity">
    <reaction evidence="5">
        <text>a lactoside III(4)-a-Fuc-Lc4Cer + GDP-beta-L-fucose = a lactoside IV(2),III(4)-a-[Fuc]2-Lc4Cer + GDP + H(+)</text>
        <dbReference type="Rhea" id="RHEA:62616"/>
        <dbReference type="ChEBI" id="CHEBI:15378"/>
        <dbReference type="ChEBI" id="CHEBI:57273"/>
        <dbReference type="ChEBI" id="CHEBI:58189"/>
        <dbReference type="ChEBI" id="CHEBI:90811"/>
        <dbReference type="ChEBI" id="CHEBI:142612"/>
    </reaction>
    <physiologicalReaction direction="left-to-right" evidence="5">
        <dbReference type="Rhea" id="RHEA:62617"/>
    </physiologicalReaction>
</comment>
<comment type="catalytic activity">
    <reaction evidence="4">
        <text>beta-D-galactosyl-(1-&gt;3)-N-acetyl-D-galactosamine + GDP-beta-L-fucose = alpha-L-fucosyl-(1-&gt;2)-beta-D-galactosyl-(1-&gt;3)-N-acetyl-D-galactosamine + GDP + H(+)</text>
        <dbReference type="Rhea" id="RHEA:62964"/>
        <dbReference type="ChEBI" id="CHEBI:15378"/>
        <dbReference type="ChEBI" id="CHEBI:57273"/>
        <dbReference type="ChEBI" id="CHEBI:58189"/>
        <dbReference type="ChEBI" id="CHEBI:84728"/>
        <dbReference type="ChEBI" id="CHEBI:546807"/>
    </reaction>
    <physiologicalReaction direction="left-to-right" evidence="4">
        <dbReference type="Rhea" id="RHEA:62965"/>
    </physiologicalReaction>
</comment>
<comment type="pathway">
    <text evidence="5">Protein modification; protein glycosylation.</text>
</comment>
<comment type="subcellular location">
    <subcellularLocation>
        <location evidence="1">Golgi apparatus</location>
        <location evidence="1">Golgi stack membrane</location>
        <topology evidence="1">Single-pass type II membrane protein</topology>
    </subcellularLocation>
    <text evidence="1">Membrane-bound form in trans cisternae of Golgi.</text>
</comment>
<comment type="similarity">
    <text evidence="7">Belongs to the glycosyltransferase 11 family.</text>
</comment>
<keyword id="KW-0325">Glycoprotein</keyword>
<keyword id="KW-0328">Glycosyltransferase</keyword>
<keyword id="KW-0333">Golgi apparatus</keyword>
<keyword id="KW-0443">Lipid metabolism</keyword>
<keyword id="KW-0472">Membrane</keyword>
<keyword id="KW-0735">Signal-anchor</keyword>
<keyword id="KW-0808">Transferase</keyword>
<keyword id="KW-0812">Transmembrane</keyword>
<keyword id="KW-1133">Transmembrane helix</keyword>
<accession>O77487</accession>
<feature type="chain" id="PRO_0000149112" description="Galactoside alpha-(1,2)-fucosyltransferase 2">
    <location>
        <begin position="1"/>
        <end position="343"/>
    </location>
</feature>
<feature type="topological domain" description="Cytoplasmic" evidence="6">
    <location>
        <begin position="1"/>
        <end position="14"/>
    </location>
</feature>
<feature type="transmembrane region" description="Helical; Signal-anchor for type II membrane protein" evidence="6">
    <location>
        <begin position="15"/>
        <end position="28"/>
    </location>
</feature>
<feature type="topological domain" description="Lumenal" evidence="6">
    <location>
        <begin position="29"/>
        <end position="343"/>
    </location>
</feature>
<feature type="glycosylation site" description="N-linked (GlcNAc...) asparagine" evidence="6">
    <location>
        <position position="188"/>
    </location>
</feature>
<feature type="glycosylation site" description="N-linked (GlcNAc...) asparagine" evidence="6">
    <location>
        <position position="282"/>
    </location>
</feature>
<feature type="glycosylation site" description="N-linked (GlcNAc...) asparagine" evidence="6">
    <location>
        <position position="308"/>
    </location>
</feature>
<gene>
    <name evidence="2" type="primary">FUT2</name>
</gene>
<reference key="1">
    <citation type="submission" date="1998-06" db="EMBL/GenBank/DDBJ databases">
        <title>The old origin of a null allele se428 of the human ABO-secretor type alpha(1,2) fucosyltransferase gene (FUT2).</title>
        <authorList>
            <person name="Koda Y."/>
            <person name="Tachida H."/>
            <person name="Soejima M."/>
            <person name="Takenaka O."/>
            <person name="Kimura H."/>
        </authorList>
    </citation>
    <scope>NUCLEOTIDE SEQUENCE [GENOMIC DNA]</scope>
</reference>
<name>FUT2_PONPY</name>
<proteinExistence type="inferred from homology"/>
<sequence>MLVVQMPFSFPVAHFILFVFTVSTIFHIQQRLAKIQAMWELPEQIPVLASTSKALGPSQLRGIWTINAIGRLGNQMGEYATLYALAKMNGRPAFIPAQMHSTLAPIFRITLPVLHSTTASRIPWQNYHLNDWMEEKYRHIPGEYVRLTGYPCSWTFYHHLRHEILQEFTLHDHVREEAQKFLRGLQVNGSQPSTFVGVHVRRGDYVHVMPKVWKGVVADRRYLQQALDWFRARYSSPIFVVTSNGMAWCQENIDTSHSDVVFAGDGIEGSPAKDFALLTQCNHTIMTIGTFGIWAAYLAGGDTIYLANYTLPDSPFLKIFKPEAAFLPEWTGIAADLSPLLKH</sequence>
<dbReference type="EC" id="2.4.1.69" evidence="5"/>
<dbReference type="EC" id="2.4.1.344" evidence="5"/>
<dbReference type="EMBL" id="AB015636">
    <property type="protein sequence ID" value="BAA31129.1"/>
    <property type="molecule type" value="Genomic_DNA"/>
</dbReference>
<dbReference type="CAZy" id="GT11">
    <property type="family name" value="Glycosyltransferase Family 11"/>
</dbReference>
<dbReference type="GlyCosmos" id="O77487">
    <property type="glycosylation" value="3 sites, No reported glycans"/>
</dbReference>
<dbReference type="BRENDA" id="2.4.1.69">
    <property type="organism ID" value="4967"/>
</dbReference>
<dbReference type="UniPathway" id="UPA00378"/>
<dbReference type="GO" id="GO:0032580">
    <property type="term" value="C:Golgi cisterna membrane"/>
    <property type="evidence" value="ECO:0007669"/>
    <property type="project" value="UniProtKB-SubCell"/>
</dbReference>
<dbReference type="GO" id="GO:0031127">
    <property type="term" value="F:alpha-(1,2)-fucosyltransferase activity"/>
    <property type="evidence" value="ECO:0000250"/>
    <property type="project" value="UniProtKB"/>
</dbReference>
<dbReference type="GO" id="GO:0008107">
    <property type="term" value="F:galactoside 2-alpha-L-fucosyltransferase activity"/>
    <property type="evidence" value="ECO:0007669"/>
    <property type="project" value="UniProtKB-EC"/>
</dbReference>
<dbReference type="GO" id="GO:0005975">
    <property type="term" value="P:carbohydrate metabolic process"/>
    <property type="evidence" value="ECO:0007669"/>
    <property type="project" value="InterPro"/>
</dbReference>
<dbReference type="GO" id="GO:0036065">
    <property type="term" value="P:fucosylation"/>
    <property type="evidence" value="ECO:0000250"/>
    <property type="project" value="UniProtKB"/>
</dbReference>
<dbReference type="GO" id="GO:0006664">
    <property type="term" value="P:glycolipid metabolic process"/>
    <property type="evidence" value="ECO:0000250"/>
    <property type="project" value="UniProtKB"/>
</dbReference>
<dbReference type="GO" id="GO:0006486">
    <property type="term" value="P:protein glycosylation"/>
    <property type="evidence" value="ECO:0007669"/>
    <property type="project" value="UniProtKB-UniPathway"/>
</dbReference>
<dbReference type="GO" id="GO:0030155">
    <property type="term" value="P:regulation of cell adhesion"/>
    <property type="evidence" value="ECO:0000250"/>
    <property type="project" value="UniProtKB"/>
</dbReference>
<dbReference type="GO" id="GO:0001936">
    <property type="term" value="P:regulation of endothelial cell proliferation"/>
    <property type="evidence" value="ECO:0000250"/>
    <property type="project" value="UniProtKB"/>
</dbReference>
<dbReference type="CDD" id="cd11301">
    <property type="entry name" value="Fut1_Fut2_like"/>
    <property type="match status" value="1"/>
</dbReference>
<dbReference type="InterPro" id="IPR002516">
    <property type="entry name" value="Glyco_trans_11"/>
</dbReference>
<dbReference type="PANTHER" id="PTHR11927">
    <property type="entry name" value="GALACTOSIDE 2-L-FUCOSYLTRANSFERASE"/>
    <property type="match status" value="1"/>
</dbReference>
<dbReference type="PANTHER" id="PTHR11927:SF2">
    <property type="entry name" value="GALACTOSIDE ALPHA-(1,2)-FUCOSYLTRANSFERASE 2"/>
    <property type="match status" value="1"/>
</dbReference>
<dbReference type="Pfam" id="PF01531">
    <property type="entry name" value="Glyco_transf_11"/>
    <property type="match status" value="1"/>
</dbReference>
<organism>
    <name type="scientific">Pongo pygmaeus</name>
    <name type="common">Bornean orangutan</name>
    <dbReference type="NCBI Taxonomy" id="9600"/>
    <lineage>
        <taxon>Eukaryota</taxon>
        <taxon>Metazoa</taxon>
        <taxon>Chordata</taxon>
        <taxon>Craniata</taxon>
        <taxon>Vertebrata</taxon>
        <taxon>Euteleostomi</taxon>
        <taxon>Mammalia</taxon>
        <taxon>Eutheria</taxon>
        <taxon>Euarchontoglires</taxon>
        <taxon>Primates</taxon>
        <taxon>Haplorrhini</taxon>
        <taxon>Catarrhini</taxon>
        <taxon>Hominidae</taxon>
        <taxon>Pongo</taxon>
    </lineage>
</organism>
<protein>
    <recommendedName>
        <fullName evidence="2">Galactoside alpha-(1,2)-fucosyltransferase 2</fullName>
    </recommendedName>
    <alternativeName>
        <fullName>Alpha(1,2)FT 2</fullName>
    </alternativeName>
    <alternativeName>
        <fullName>Fucosyltransferase 2</fullName>
    </alternativeName>
    <alternativeName>
        <fullName>GDP-L-fucose:beta-D-galactoside 2-alpha-L-fucosyltransferase 2</fullName>
    </alternativeName>
    <alternativeName>
        <fullName evidence="2">Type 1 galactoside alpha-(1,2)-fucosyltransferase FUT2</fullName>
        <ecNumber evidence="5">2.4.1.69</ecNumber>
    </alternativeName>
    <alternativeName>
        <fullName evidence="2">Type 2 galactoside alpha-(1,2)-fucosyltransferase FUT2</fullName>
        <ecNumber evidence="5">2.4.1.344</ecNumber>
    </alternativeName>
</protein>
<evidence type="ECO:0000250" key="1"/>
<evidence type="ECO:0000250" key="2">
    <source>
        <dbReference type="UniProtKB" id="Q10981"/>
    </source>
</evidence>
<evidence type="ECO:0000250" key="3">
    <source>
        <dbReference type="UniProtKB" id="Q10984"/>
    </source>
</evidence>
<evidence type="ECO:0000250" key="4">
    <source>
        <dbReference type="UniProtKB" id="Q28113"/>
    </source>
</evidence>
<evidence type="ECO:0000250" key="5">
    <source>
        <dbReference type="UniProtKB" id="Q9JL27"/>
    </source>
</evidence>
<evidence type="ECO:0000255" key="6"/>
<evidence type="ECO:0000305" key="7"/>